<comment type="function">
    <text evidence="1">Polynucleotide 5'-kinase involved in rRNA processing.</text>
</comment>
<comment type="subcellular location">
    <subcellularLocation>
        <location evidence="1">Nucleus</location>
        <location evidence="1">Nucleolus</location>
    </subcellularLocation>
</comment>
<comment type="alternative products">
    <event type="alternative splicing"/>
    <isoform>
        <id>Q9U3B6-1</id>
        <name>a</name>
        <sequence type="displayed"/>
    </isoform>
    <isoform>
        <id>Q9U3B6-2</id>
        <name>b</name>
        <sequence type="described" ref="VSP_040447"/>
    </isoform>
</comment>
<comment type="similarity">
    <text evidence="3">Belongs to the Clp1 family. NOL9/GRC3 subfamily.</text>
</comment>
<feature type="chain" id="PRO_0000403779" description="Polynucleotide 5'-hydroxyl-kinase nol-9">
    <location>
        <begin position="1"/>
        <end position="549"/>
    </location>
</feature>
<feature type="binding site" evidence="2">
    <location>
        <begin position="190"/>
        <end position="197"/>
    </location>
    <ligand>
        <name>ATP</name>
        <dbReference type="ChEBI" id="CHEBI:30616"/>
    </ligand>
</feature>
<feature type="splice variant" id="VSP_040447" description="In isoform b." evidence="3">
    <location>
        <begin position="1"/>
        <end position="424"/>
    </location>
</feature>
<reference key="1">
    <citation type="journal article" date="1998" name="Science">
        <title>Genome sequence of the nematode C. elegans: a platform for investigating biology.</title>
        <authorList>
            <consortium name="The C. elegans sequencing consortium"/>
        </authorList>
    </citation>
    <scope>NUCLEOTIDE SEQUENCE [LARGE SCALE GENOMIC DNA]</scope>
    <scope>ALTERNATIVE SPLICING (ISOFORMS A AND B)</scope>
    <source>
        <strain>Bristol N2</strain>
    </source>
</reference>
<protein>
    <recommendedName>
        <fullName>Polynucleotide 5'-hydroxyl-kinase nol-9</fullName>
        <ecNumber>2.7.1.-</ecNumber>
    </recommendedName>
    <alternativeName>
        <fullName>Nucleolar protein 9 homolog</fullName>
    </alternativeName>
</protein>
<dbReference type="EC" id="2.7.1.-"/>
<dbReference type="EMBL" id="Z83114">
    <property type="protein sequence ID" value="CAB63234.1"/>
    <property type="molecule type" value="Genomic_DNA"/>
</dbReference>
<dbReference type="EMBL" id="Z83114">
    <property type="protein sequence ID" value="CBK19460.1"/>
    <property type="molecule type" value="Genomic_DNA"/>
</dbReference>
<dbReference type="RefSeq" id="NP_001255744.1">
    <molecule id="Q9U3B6-1"/>
    <property type="nucleotide sequence ID" value="NM_001268815.2"/>
</dbReference>
<dbReference type="RefSeq" id="NP_001255745.1">
    <molecule id="Q9U3B6-2"/>
    <property type="nucleotide sequence ID" value="NM_001268816.3"/>
</dbReference>
<dbReference type="SMR" id="Q9U3B6"/>
<dbReference type="BioGRID" id="51895">
    <property type="interactions" value="2"/>
</dbReference>
<dbReference type="FunCoup" id="Q9U3B6">
    <property type="interactions" value="2120"/>
</dbReference>
<dbReference type="STRING" id="6239.K09B11.2a.1"/>
<dbReference type="PaxDb" id="6239-K09B11.2a"/>
<dbReference type="PeptideAtlas" id="Q9U3B6"/>
<dbReference type="EnsemblMetazoa" id="K09B11.2a.1">
    <molecule id="Q9U3B6-1"/>
    <property type="protein sequence ID" value="K09B11.2a.1"/>
    <property type="gene ID" value="WBGene00010709"/>
</dbReference>
<dbReference type="EnsemblMetazoa" id="K09B11.2b.1">
    <molecule id="Q9U3B6-2"/>
    <property type="protein sequence ID" value="K09B11.2b.1"/>
    <property type="gene ID" value="WBGene00010709"/>
</dbReference>
<dbReference type="GeneID" id="187190"/>
<dbReference type="KEGG" id="cel:CELE_K09B11.2"/>
<dbReference type="UCSC" id="K09B11.2">
    <molecule id="Q9U3B6-1"/>
    <property type="organism name" value="c. elegans"/>
</dbReference>
<dbReference type="AGR" id="WB:WBGene00010709"/>
<dbReference type="CTD" id="187190"/>
<dbReference type="WormBase" id="K09B11.2a">
    <molecule id="Q9U3B6-1"/>
    <property type="protein sequence ID" value="CE19989"/>
    <property type="gene ID" value="WBGene00010709"/>
    <property type="gene designation" value="nol-9"/>
</dbReference>
<dbReference type="WormBase" id="K09B11.2b">
    <molecule id="Q9U3B6-2"/>
    <property type="protein sequence ID" value="CE44574"/>
    <property type="gene ID" value="WBGene00010709"/>
    <property type="gene designation" value="nol-9"/>
</dbReference>
<dbReference type="eggNOG" id="KOG2750">
    <property type="taxonomic scope" value="Eukaryota"/>
</dbReference>
<dbReference type="GeneTree" id="ENSGT00940000153668"/>
<dbReference type="HOGENOM" id="CLU_555791_0_0_1"/>
<dbReference type="InParanoid" id="Q9U3B6"/>
<dbReference type="OMA" id="HGQIFFL"/>
<dbReference type="OrthoDB" id="2405412at2759"/>
<dbReference type="PhylomeDB" id="Q9U3B6"/>
<dbReference type="Reactome" id="R-CEL-6791226">
    <property type="pathway name" value="Major pathway of rRNA processing in the nucleolus and cytosol"/>
</dbReference>
<dbReference type="PRO" id="PR:Q9U3B6"/>
<dbReference type="Proteomes" id="UP000001940">
    <property type="component" value="Chromosome IV"/>
</dbReference>
<dbReference type="Bgee" id="WBGene00010709">
    <property type="expression patterns" value="Expressed in germ line (C elegans) and 4 other cell types or tissues"/>
</dbReference>
<dbReference type="GO" id="GO:0005730">
    <property type="term" value="C:nucleolus"/>
    <property type="evidence" value="ECO:0007669"/>
    <property type="project" value="UniProtKB-SubCell"/>
</dbReference>
<dbReference type="GO" id="GO:0005634">
    <property type="term" value="C:nucleus"/>
    <property type="evidence" value="ECO:0000318"/>
    <property type="project" value="GO_Central"/>
</dbReference>
<dbReference type="GO" id="GO:0005524">
    <property type="term" value="F:ATP binding"/>
    <property type="evidence" value="ECO:0007669"/>
    <property type="project" value="UniProtKB-KW"/>
</dbReference>
<dbReference type="GO" id="GO:0051731">
    <property type="term" value="F:polynucleotide 5'-hydroxyl-kinase activity"/>
    <property type="evidence" value="ECO:0000250"/>
    <property type="project" value="UniProtKB"/>
</dbReference>
<dbReference type="GO" id="GO:0000448">
    <property type="term" value="P:cleavage in ITS2 between 5.8S rRNA and LSU-rRNA of tricistronic rRNA transcript (SSU-rRNA, 5.8S rRNA, LSU-rRNA)"/>
    <property type="evidence" value="ECO:0000318"/>
    <property type="project" value="GO_Central"/>
</dbReference>
<dbReference type="GO" id="GO:0006364">
    <property type="term" value="P:rRNA processing"/>
    <property type="evidence" value="ECO:0000250"/>
    <property type="project" value="UniProtKB"/>
</dbReference>
<dbReference type="FunFam" id="3.40.50.300:FF:003052">
    <property type="entry name" value="Polynucleotide 5'-hydroxyl-kinase nol-9"/>
    <property type="match status" value="1"/>
</dbReference>
<dbReference type="Gene3D" id="3.40.50.300">
    <property type="entry name" value="P-loop containing nucleotide triphosphate hydrolases"/>
    <property type="match status" value="1"/>
</dbReference>
<dbReference type="InterPro" id="IPR045116">
    <property type="entry name" value="Clp1/Grc3"/>
</dbReference>
<dbReference type="InterPro" id="IPR032319">
    <property type="entry name" value="CLP1_P"/>
</dbReference>
<dbReference type="InterPro" id="IPR027417">
    <property type="entry name" value="P-loop_NTPase"/>
</dbReference>
<dbReference type="PANTHER" id="PTHR12755">
    <property type="entry name" value="CLEAVAGE/POLYADENYLATION FACTOR IA SUBUNIT CLP1P"/>
    <property type="match status" value="1"/>
</dbReference>
<dbReference type="PANTHER" id="PTHR12755:SF3">
    <property type="entry name" value="POLYNUCLEOTIDE 5'-HYDROXYL-KINASE NOL9"/>
    <property type="match status" value="1"/>
</dbReference>
<dbReference type="Pfam" id="PF16575">
    <property type="entry name" value="CLP1_P"/>
    <property type="match status" value="1"/>
</dbReference>
<dbReference type="Pfam" id="PF25467">
    <property type="entry name" value="NOL9_C"/>
    <property type="match status" value="1"/>
</dbReference>
<name>NOL9_CAEEL</name>
<accession>Q9U3B6</accession>
<accession>D3YT82</accession>
<keyword id="KW-0025">Alternative splicing</keyword>
<keyword id="KW-0067">ATP-binding</keyword>
<keyword id="KW-0418">Kinase</keyword>
<keyword id="KW-0547">Nucleotide-binding</keyword>
<keyword id="KW-0539">Nucleus</keyword>
<keyword id="KW-1185">Reference proteome</keyword>
<keyword id="KW-0698">rRNA processing</keyword>
<keyword id="KW-0808">Transferase</keyword>
<evidence type="ECO:0000250" key="1"/>
<evidence type="ECO:0000255" key="2"/>
<evidence type="ECO:0000305" key="3"/>
<proteinExistence type="inferred from homology"/>
<organism>
    <name type="scientific">Caenorhabditis elegans</name>
    <dbReference type="NCBI Taxonomy" id="6239"/>
    <lineage>
        <taxon>Eukaryota</taxon>
        <taxon>Metazoa</taxon>
        <taxon>Ecdysozoa</taxon>
        <taxon>Nematoda</taxon>
        <taxon>Chromadorea</taxon>
        <taxon>Rhabditida</taxon>
        <taxon>Rhabditina</taxon>
        <taxon>Rhabditomorpha</taxon>
        <taxon>Rhabditoidea</taxon>
        <taxon>Rhabditidae</taxon>
        <taxon>Peloderinae</taxon>
        <taxon>Caenorhabditis</taxon>
    </lineage>
</organism>
<sequence length="549" mass="61990">MEEVVRFECRDSNLEIYVVQPGERLSIFGSCSFLCLAGNASINDYNLPAVSCESSNFMKISAPQRMDVPAILQVFKSGPSYKHARLKFRLKEVAPKNYEKIMEMIGTTEPSVFIFSKILDFAEETVSGVVSNFLIHSSIQKQIILPPHFFISRDDFIIYPQQQEAQLKSQMNRLNKLRNDGQRTTILPIGHKGAGKSNLMRSLVNRCLSNGYEHVYVLDCDIGQSEFTPCGCLSLTKVTSPILGKPHGHQRASFENSFFYGDITVRDINLYMDIFERLFNKFKVISEPGSVCIINSMGWVTDEGAEILDGITRVTDPELFVEIFRDQTEARYQFLNRAEHNIVEIFANNSIGVIGLPPQKRLPAALIRELTIVGYFSSRLPRPSLASFPKVAPYKLRFENVTICVPVDLLVEDSHVFSSINTQIMALCINNTDLKPRKLYGKDDLPSICVIDGNSPALQCIGFGIIRGVSVEERIIFVVTPVDLLKLEEPPVLVRGMRIQTPTMFYTADPYNRCPYVLNDLEQGNSDNTLDGLYQPSVNTTQFKRSRRF</sequence>
<gene>
    <name type="primary">nol-9</name>
    <name type="ORF">K09B11.2</name>
</gene>